<comment type="function">
    <text evidence="1">Binds to the inner side of the nucleosomal DNA thus altering the interaction between the DNA and the histone octamer. May be involved in the process which maintains transcribable genes in a unique chromatin conformation (By similarity).</text>
</comment>
<comment type="subcellular location">
    <subcellularLocation>
        <location evidence="4">Nucleus</location>
    </subcellularLocation>
    <subcellularLocation>
        <location evidence="1">Cytoplasm</location>
    </subcellularLocation>
    <text evidence="1">Cytoplasmic enrichment upon phosphorylation.</text>
</comment>
<comment type="PTM">
    <text evidence="1">Phosphorylation favors cytoplasmic localization.</text>
</comment>
<comment type="similarity">
    <text evidence="5">Belongs to the HMGN family.</text>
</comment>
<keyword id="KW-0007">Acetylation</keyword>
<keyword id="KW-0013">ADP-ribosylation</keyword>
<keyword id="KW-0963">Cytoplasm</keyword>
<keyword id="KW-0238">DNA-binding</keyword>
<keyword id="KW-1017">Isopeptide bond</keyword>
<keyword id="KW-0539">Nucleus</keyword>
<keyword id="KW-0597">Phosphoprotein</keyword>
<keyword id="KW-1185">Reference proteome</keyword>
<keyword id="KW-0832">Ubl conjugation</keyword>
<sequence>MPKRKAEGDAKGDKAKVKDEPQRRSARLSAKPAPPKPEPKPKKAPAKKGEKVPKGKKGKADAGKDGNNPAENGDAKTDQAQKAEGAGDAK</sequence>
<organism>
    <name type="scientific">Canis lupus familiaris</name>
    <name type="common">Dog</name>
    <name type="synonym">Canis familiaris</name>
    <dbReference type="NCBI Taxonomy" id="9615"/>
    <lineage>
        <taxon>Eukaryota</taxon>
        <taxon>Metazoa</taxon>
        <taxon>Chordata</taxon>
        <taxon>Craniata</taxon>
        <taxon>Vertebrata</taxon>
        <taxon>Euteleostomi</taxon>
        <taxon>Mammalia</taxon>
        <taxon>Eutheria</taxon>
        <taxon>Laurasiatheria</taxon>
        <taxon>Carnivora</taxon>
        <taxon>Caniformia</taxon>
        <taxon>Canidae</taxon>
        <taxon>Canis</taxon>
    </lineage>
</organism>
<proteinExistence type="inferred from homology"/>
<evidence type="ECO:0000250" key="1"/>
<evidence type="ECO:0000250" key="2">
    <source>
        <dbReference type="UniProtKB" id="P05204"/>
    </source>
</evidence>
<evidence type="ECO:0000256" key="3">
    <source>
        <dbReference type="SAM" id="MobiDB-lite"/>
    </source>
</evidence>
<evidence type="ECO:0000269" key="4">
    <source>
    </source>
</evidence>
<evidence type="ECO:0000305" key="5"/>
<reference key="1">
    <citation type="journal article" date="2000" name="Anal. Biochem.">
        <title>A method for the large-scale cloning of nuclear proteins and nuclear targeting sequences on a functional basis.</title>
        <authorList>
            <person name="Pichon B."/>
            <person name="Mercan D."/>
            <person name="Pouillon V."/>
            <person name="Christophe-Hobertus C."/>
            <person name="Christophe D."/>
        </authorList>
    </citation>
    <scope>NUCLEOTIDE SEQUENCE [LARGE SCALE MRNA]</scope>
    <scope>SUBCELLULAR LOCATION</scope>
    <source>
        <tissue>Thyroid</tissue>
    </source>
</reference>
<gene>
    <name type="primary">HMGN2</name>
    <name type="synonym">HMG17</name>
    <name type="ORF">V2.22</name>
</gene>
<dbReference type="EMBL" id="AJ388518">
    <property type="protein sequence ID" value="CAB46820.1"/>
    <property type="molecule type" value="mRNA"/>
</dbReference>
<dbReference type="RefSeq" id="NP_001003101.1">
    <property type="nucleotide sequence ID" value="NM_001003101.3"/>
</dbReference>
<dbReference type="FunCoup" id="Q711A6">
    <property type="interactions" value="1"/>
</dbReference>
<dbReference type="STRING" id="9615.ENSCAFP00000057354"/>
<dbReference type="PaxDb" id="9612-ENSCAFP00000030733"/>
<dbReference type="Ensembl" id="ENSCAFT00030026301.1">
    <property type="protein sequence ID" value="ENSCAFP00030022963.1"/>
    <property type="gene ID" value="ENSCAFG00030014201.1"/>
</dbReference>
<dbReference type="Ensembl" id="ENSCAFT00040007618.1">
    <property type="protein sequence ID" value="ENSCAFP00040006647.1"/>
    <property type="gene ID" value="ENSCAFG00040003963.1"/>
</dbReference>
<dbReference type="GeneID" id="403686"/>
<dbReference type="KEGG" id="cfa:403686"/>
<dbReference type="CTD" id="3151"/>
<dbReference type="eggNOG" id="ENOG502S5FK">
    <property type="taxonomic scope" value="Eukaryota"/>
</dbReference>
<dbReference type="HOGENOM" id="CLU_141985_0_2_1"/>
<dbReference type="InParanoid" id="Q711A6"/>
<dbReference type="OMA" id="SEQQHCR"/>
<dbReference type="OrthoDB" id="9973183at2759"/>
<dbReference type="Proteomes" id="UP000002254">
    <property type="component" value="Unplaced"/>
</dbReference>
<dbReference type="Proteomes" id="UP000694429">
    <property type="component" value="Chromosome 2"/>
</dbReference>
<dbReference type="Proteomes" id="UP000694542">
    <property type="component" value="Chromosome 2"/>
</dbReference>
<dbReference type="Proteomes" id="UP000805418">
    <property type="component" value="Unplaced"/>
</dbReference>
<dbReference type="Bgee" id="ENSCAFG00000028705">
    <property type="expression patterns" value="Expressed in thymus and 46 other cell types or tissues"/>
</dbReference>
<dbReference type="GO" id="GO:0000785">
    <property type="term" value="C:chromatin"/>
    <property type="evidence" value="ECO:0007669"/>
    <property type="project" value="InterPro"/>
</dbReference>
<dbReference type="GO" id="GO:0005737">
    <property type="term" value="C:cytoplasm"/>
    <property type="evidence" value="ECO:0007669"/>
    <property type="project" value="UniProtKB-SubCell"/>
</dbReference>
<dbReference type="GO" id="GO:0005634">
    <property type="term" value="C:nucleus"/>
    <property type="evidence" value="ECO:0000318"/>
    <property type="project" value="GO_Central"/>
</dbReference>
<dbReference type="GO" id="GO:0003682">
    <property type="term" value="F:chromatin binding"/>
    <property type="evidence" value="ECO:0000318"/>
    <property type="project" value="GO_Central"/>
</dbReference>
<dbReference type="GO" id="GO:0031492">
    <property type="term" value="F:nucleosomal DNA binding"/>
    <property type="evidence" value="ECO:0007669"/>
    <property type="project" value="InterPro"/>
</dbReference>
<dbReference type="GO" id="GO:0006325">
    <property type="term" value="P:chromatin organization"/>
    <property type="evidence" value="ECO:0000318"/>
    <property type="project" value="GO_Central"/>
</dbReference>
<dbReference type="InterPro" id="IPR000079">
    <property type="entry name" value="HMGN_fam"/>
</dbReference>
<dbReference type="PANTHER" id="PTHR23087:SF13">
    <property type="entry name" value="NON-HISTONE CHROMOSOMAL PROTEIN HMG-17"/>
    <property type="match status" value="1"/>
</dbReference>
<dbReference type="PANTHER" id="PTHR23087">
    <property type="entry name" value="NONHISTONE CHROMOSOMAL PROTEIN HMG"/>
    <property type="match status" value="1"/>
</dbReference>
<dbReference type="Pfam" id="PF01101">
    <property type="entry name" value="HMG14_17"/>
    <property type="match status" value="1"/>
</dbReference>
<dbReference type="PRINTS" id="PR00925">
    <property type="entry name" value="NONHISHMG17"/>
</dbReference>
<dbReference type="SMART" id="SM00527">
    <property type="entry name" value="HMG17"/>
    <property type="match status" value="1"/>
</dbReference>
<dbReference type="PROSITE" id="PS00355">
    <property type="entry name" value="HMG14_17"/>
    <property type="match status" value="1"/>
</dbReference>
<feature type="chain" id="PRO_0000206696" description="Non-histone chromosomal protein HMG-17">
    <location>
        <begin position="1"/>
        <end position="90"/>
    </location>
</feature>
<feature type="region of interest" description="Disordered" evidence="3">
    <location>
        <begin position="1"/>
        <end position="90"/>
    </location>
</feature>
<feature type="compositionally biased region" description="Basic and acidic residues" evidence="3">
    <location>
        <begin position="1"/>
        <end position="23"/>
    </location>
</feature>
<feature type="compositionally biased region" description="Basic and acidic residues" evidence="3">
    <location>
        <begin position="37"/>
        <end position="64"/>
    </location>
</feature>
<feature type="compositionally biased region" description="Basic and acidic residues" evidence="3">
    <location>
        <begin position="73"/>
        <end position="90"/>
    </location>
</feature>
<feature type="modified residue" description="Phosphoserine" evidence="2">
    <location>
        <position position="25"/>
    </location>
</feature>
<feature type="modified residue" description="ADP-ribosylserine; alternate" evidence="2">
    <location>
        <position position="29"/>
    </location>
</feature>
<feature type="modified residue" description="Phosphoserine; alternate" evidence="2">
    <location>
        <position position="29"/>
    </location>
</feature>
<feature type="modified residue" description="N6-acetyllysine; alternate" evidence="2">
    <location>
        <position position="82"/>
    </location>
</feature>
<feature type="cross-link" description="Glycyl lysine isopeptide (Lys-Gly) (interchain with G-Cter in SUMO2); alternate" evidence="2">
    <location>
        <position position="82"/>
    </location>
</feature>
<accession>Q711A6</accession>
<name>HMGN2_CANLF</name>
<protein>
    <recommendedName>
        <fullName>Non-histone chromosomal protein HMG-17</fullName>
    </recommendedName>
    <alternativeName>
        <fullName>High mobility group nucleosome-binding domain-containing protein 2</fullName>
    </alternativeName>
</protein>